<reference key="1">
    <citation type="submission" date="2006-12" db="EMBL/GenBank/DDBJ databases">
        <title>Complete sequence of chromosome 2 of Paracoccus denitrificans PD1222.</title>
        <authorList>
            <person name="Copeland A."/>
            <person name="Lucas S."/>
            <person name="Lapidus A."/>
            <person name="Barry K."/>
            <person name="Detter J.C."/>
            <person name="Glavina del Rio T."/>
            <person name="Hammon N."/>
            <person name="Israni S."/>
            <person name="Dalin E."/>
            <person name="Tice H."/>
            <person name="Pitluck S."/>
            <person name="Munk A.C."/>
            <person name="Brettin T."/>
            <person name="Bruce D."/>
            <person name="Han C."/>
            <person name="Tapia R."/>
            <person name="Gilna P."/>
            <person name="Schmutz J."/>
            <person name="Larimer F."/>
            <person name="Land M."/>
            <person name="Hauser L."/>
            <person name="Kyrpides N."/>
            <person name="Lykidis A."/>
            <person name="Spiro S."/>
            <person name="Richardson D.J."/>
            <person name="Moir J.W.B."/>
            <person name="Ferguson S.J."/>
            <person name="van Spanning R.J.M."/>
            <person name="Richardson P."/>
        </authorList>
    </citation>
    <scope>NUCLEOTIDE SEQUENCE [LARGE SCALE GENOMIC DNA]</scope>
    <source>
        <strain>Pd 1222</strain>
    </source>
</reference>
<evidence type="ECO:0000255" key="1">
    <source>
        <dbReference type="HAMAP-Rule" id="MF_00402"/>
    </source>
</evidence>
<evidence type="ECO:0000305" key="2"/>
<accession>A1B8V6</accession>
<proteinExistence type="inferred from homology"/>
<comment type="function">
    <text evidence="1">This protein is located at the 30S-50S ribosomal subunit interface and may play a role in the structure and function of the aminoacyl-tRNA binding site.</text>
</comment>
<comment type="similarity">
    <text evidence="1">Belongs to the bacterial ribosomal protein bL19 family.</text>
</comment>
<sequence length="126" mass="13983">MNLIAQLEAEQIAALGKDIPDFKAGDTVRVGYKVTEGTRTRVQMYEGVVISRKGGGIGASFTVRKISFGEGVERVFPLYSTNIDSITVVRRGRVRRAKLYYLRDRRGKSARIAEVSNYKPKADAKA</sequence>
<dbReference type="EMBL" id="CP000490">
    <property type="protein sequence ID" value="ABL71950.1"/>
    <property type="molecule type" value="Genomic_DNA"/>
</dbReference>
<dbReference type="RefSeq" id="WP_011750117.1">
    <property type="nucleotide sequence ID" value="NC_008687.1"/>
</dbReference>
<dbReference type="SMR" id="A1B8V6"/>
<dbReference type="STRING" id="318586.Pden_3884"/>
<dbReference type="EnsemblBacteria" id="ABL71950">
    <property type="protein sequence ID" value="ABL71950"/>
    <property type="gene ID" value="Pden_3884"/>
</dbReference>
<dbReference type="GeneID" id="93453544"/>
<dbReference type="KEGG" id="pde:Pden_3884"/>
<dbReference type="eggNOG" id="COG0335">
    <property type="taxonomic scope" value="Bacteria"/>
</dbReference>
<dbReference type="HOGENOM" id="CLU_103507_0_2_5"/>
<dbReference type="OrthoDB" id="9803541at2"/>
<dbReference type="Proteomes" id="UP000000361">
    <property type="component" value="Chromosome 2"/>
</dbReference>
<dbReference type="GO" id="GO:0022625">
    <property type="term" value="C:cytosolic large ribosomal subunit"/>
    <property type="evidence" value="ECO:0007669"/>
    <property type="project" value="TreeGrafter"/>
</dbReference>
<dbReference type="GO" id="GO:0003735">
    <property type="term" value="F:structural constituent of ribosome"/>
    <property type="evidence" value="ECO:0007669"/>
    <property type="project" value="InterPro"/>
</dbReference>
<dbReference type="GO" id="GO:0006412">
    <property type="term" value="P:translation"/>
    <property type="evidence" value="ECO:0007669"/>
    <property type="project" value="UniProtKB-UniRule"/>
</dbReference>
<dbReference type="FunFam" id="2.30.30.790:FF:000001">
    <property type="entry name" value="50S ribosomal protein L19"/>
    <property type="match status" value="1"/>
</dbReference>
<dbReference type="Gene3D" id="2.30.30.790">
    <property type="match status" value="1"/>
</dbReference>
<dbReference type="HAMAP" id="MF_00402">
    <property type="entry name" value="Ribosomal_bL19"/>
    <property type="match status" value="1"/>
</dbReference>
<dbReference type="InterPro" id="IPR001857">
    <property type="entry name" value="Ribosomal_bL19"/>
</dbReference>
<dbReference type="InterPro" id="IPR018257">
    <property type="entry name" value="Ribosomal_bL19_CS"/>
</dbReference>
<dbReference type="InterPro" id="IPR038657">
    <property type="entry name" value="Ribosomal_bL19_sf"/>
</dbReference>
<dbReference type="InterPro" id="IPR008991">
    <property type="entry name" value="Translation_prot_SH3-like_sf"/>
</dbReference>
<dbReference type="NCBIfam" id="TIGR01024">
    <property type="entry name" value="rplS_bact"/>
    <property type="match status" value="1"/>
</dbReference>
<dbReference type="PANTHER" id="PTHR15680:SF9">
    <property type="entry name" value="LARGE RIBOSOMAL SUBUNIT PROTEIN BL19M"/>
    <property type="match status" value="1"/>
</dbReference>
<dbReference type="PANTHER" id="PTHR15680">
    <property type="entry name" value="RIBOSOMAL PROTEIN L19"/>
    <property type="match status" value="1"/>
</dbReference>
<dbReference type="Pfam" id="PF01245">
    <property type="entry name" value="Ribosomal_L19"/>
    <property type="match status" value="1"/>
</dbReference>
<dbReference type="PIRSF" id="PIRSF002191">
    <property type="entry name" value="Ribosomal_L19"/>
    <property type="match status" value="1"/>
</dbReference>
<dbReference type="PRINTS" id="PR00061">
    <property type="entry name" value="RIBOSOMALL19"/>
</dbReference>
<dbReference type="SUPFAM" id="SSF50104">
    <property type="entry name" value="Translation proteins SH3-like domain"/>
    <property type="match status" value="1"/>
</dbReference>
<dbReference type="PROSITE" id="PS01015">
    <property type="entry name" value="RIBOSOMAL_L19"/>
    <property type="match status" value="1"/>
</dbReference>
<organism>
    <name type="scientific">Paracoccus denitrificans (strain Pd 1222)</name>
    <dbReference type="NCBI Taxonomy" id="318586"/>
    <lineage>
        <taxon>Bacteria</taxon>
        <taxon>Pseudomonadati</taxon>
        <taxon>Pseudomonadota</taxon>
        <taxon>Alphaproteobacteria</taxon>
        <taxon>Rhodobacterales</taxon>
        <taxon>Paracoccaceae</taxon>
        <taxon>Paracoccus</taxon>
    </lineage>
</organism>
<keyword id="KW-1185">Reference proteome</keyword>
<keyword id="KW-0687">Ribonucleoprotein</keyword>
<keyword id="KW-0689">Ribosomal protein</keyword>
<name>RL19_PARDP</name>
<feature type="chain" id="PRO_1000049714" description="Large ribosomal subunit protein bL19">
    <location>
        <begin position="1"/>
        <end position="126"/>
    </location>
</feature>
<gene>
    <name evidence="1" type="primary">rplS</name>
    <name type="ordered locus">Pden_3884</name>
</gene>
<protein>
    <recommendedName>
        <fullName evidence="1">Large ribosomal subunit protein bL19</fullName>
    </recommendedName>
    <alternativeName>
        <fullName evidence="2">50S ribosomal protein L19</fullName>
    </alternativeName>
</protein>